<reference key="1">
    <citation type="journal article" date="1991" name="FEBS Lett.">
        <title>The primary structure of the glutamic acid-specific protease of Streptomyces griseus.</title>
        <authorList>
            <person name="Svendsen I."/>
            <person name="Jensen M.R."/>
            <person name="Breddam K."/>
        </authorList>
    </citation>
    <scope>NUCLEOTIDE SEQUENCE [GENOMIC DNA] OF 43-121</scope>
    <scope>PROTEIN SEQUENCE</scope>
    <source>
        <strain>IMRU 3499</strain>
    </source>
</reference>
<reference key="2">
    <citation type="journal article" date="1992" name="Eur. J. Biochem.">
        <title>Substrate preferences of glutamic-acid-specific endopeptidases assessed by synthetic peptide substrates based on intramolecular fluorescence quenching.</title>
        <authorList>
            <person name="Breddam K."/>
            <person name="Meldal M."/>
        </authorList>
    </citation>
    <scope>CHARACTERIZATION</scope>
</reference>
<reference key="3">
    <citation type="journal article" date="1993" name="FEBS Lett.">
        <title>A structural model for the glutamate-specific endopeptidase from Streptomyces griseus that explains substrate specificity.</title>
        <authorList>
            <person name="Barbosa J.A.R.G."/>
            <person name="Garratt R.C."/>
            <person name="Saldanha J.W."/>
        </authorList>
    </citation>
    <scope>3D-STRUCTURE MODELING</scope>
</reference>
<reference key="4">
    <citation type="journal article" date="1993" name="Biochemistry">
        <title>A glutamic acid specific serine protease utilizes a novel histidine triad in substrate binding.</title>
        <authorList>
            <person name="Nienaber V.L."/>
            <person name="Breddam K."/>
            <person name="Birktoft J.J."/>
        </authorList>
    </citation>
    <scope>X-RAY CRYSTALLOGRAPHY (1.5 ANGSTROMS)</scope>
</reference>
<comment type="function">
    <text>Preferentially cleaves peptide bonds on the carboxyl-terminal side of glutamate.</text>
</comment>
<comment type="catalytic activity">
    <reaction>
        <text>Preferential cleavage: -Glu-|-Xaa- &gt;&gt; -Asp-|-Xaa-. Preference for Pro or Leu at P2 and Phe at P3. Cleavage of -Glu-|-Asp- and -Glu-|-Pro- bonds is slow.</text>
        <dbReference type="EC" id="3.4.21.82"/>
    </reaction>
</comment>
<comment type="subunit">
    <text>Monomer.</text>
</comment>
<comment type="similarity">
    <text evidence="2">Belongs to the peptidase S1 family.</text>
</comment>
<keyword id="KW-0002">3D-structure</keyword>
<keyword id="KW-0903">Direct protein sequencing</keyword>
<keyword id="KW-1015">Disulfide bond</keyword>
<keyword id="KW-0378">Hydrolase</keyword>
<keyword id="KW-0645">Protease</keyword>
<keyword id="KW-0720">Serine protease</keyword>
<protein>
    <recommendedName>
        <fullName>Glutamyl endopeptidase 2</fullName>
        <ecNumber>3.4.21.82</ecNumber>
    </recommendedName>
    <alternativeName>
        <fullName>GLUSGP</fullName>
    </alternativeName>
    <alternativeName>
        <fullName>Glutamic acid-specific protease</fullName>
    </alternativeName>
    <alternativeName>
        <fullName>Glutamyl endopeptidase II</fullName>
    </alternativeName>
    <alternativeName>
        <fullName>SGPE</fullName>
    </alternativeName>
    <alternativeName>
        <fullName>Serine protease E</fullName>
    </alternativeName>
    <alternativeName>
        <fullName>Streptogrisin-E</fullName>
    </alternativeName>
</protein>
<dbReference type="EC" id="3.4.21.82"/>
<dbReference type="EMBL" id="S67853">
    <property type="protein sequence ID" value="AAB20424.2"/>
    <property type="molecule type" value="Genomic_DNA"/>
</dbReference>
<dbReference type="PDB" id="1HPG">
    <property type="method" value="X-ray"/>
    <property type="resolution" value="1.50 A"/>
    <property type="chains" value="A=1-187"/>
</dbReference>
<dbReference type="PDBsum" id="1HPG"/>
<dbReference type="SMR" id="Q07006"/>
<dbReference type="MEROPS" id="S01.267"/>
<dbReference type="EvolutionaryTrace" id="Q07006"/>
<dbReference type="GO" id="GO:0004252">
    <property type="term" value="F:serine-type endopeptidase activity"/>
    <property type="evidence" value="ECO:0007669"/>
    <property type="project" value="InterPro"/>
</dbReference>
<dbReference type="GO" id="GO:0006508">
    <property type="term" value="P:proteolysis"/>
    <property type="evidence" value="ECO:0007669"/>
    <property type="project" value="UniProtKB-KW"/>
</dbReference>
<dbReference type="CDD" id="cd21112">
    <property type="entry name" value="alphaLP-like"/>
    <property type="match status" value="1"/>
</dbReference>
<dbReference type="Gene3D" id="2.40.10.10">
    <property type="entry name" value="Trypsin-like serine proteases"/>
    <property type="match status" value="2"/>
</dbReference>
<dbReference type="InterPro" id="IPR001316">
    <property type="entry name" value="Pept_S1A_streptogrisin"/>
</dbReference>
<dbReference type="InterPro" id="IPR009003">
    <property type="entry name" value="Peptidase_S1_PA"/>
</dbReference>
<dbReference type="InterPro" id="IPR043504">
    <property type="entry name" value="Peptidase_S1_PA_chymotrypsin"/>
</dbReference>
<dbReference type="InterPro" id="IPR001254">
    <property type="entry name" value="Trypsin_dom"/>
</dbReference>
<dbReference type="InterPro" id="IPR018114">
    <property type="entry name" value="TRYPSIN_HIS"/>
</dbReference>
<dbReference type="InterPro" id="IPR033116">
    <property type="entry name" value="TRYPSIN_SER"/>
</dbReference>
<dbReference type="Pfam" id="PF00089">
    <property type="entry name" value="Trypsin"/>
    <property type="match status" value="1"/>
</dbReference>
<dbReference type="PRINTS" id="PR00861">
    <property type="entry name" value="ALYTICPTASE"/>
</dbReference>
<dbReference type="SUPFAM" id="SSF50494">
    <property type="entry name" value="Trypsin-like serine proteases"/>
    <property type="match status" value="1"/>
</dbReference>
<dbReference type="PROSITE" id="PS00134">
    <property type="entry name" value="TRYPSIN_HIS"/>
    <property type="match status" value="1"/>
</dbReference>
<dbReference type="PROSITE" id="PS00135">
    <property type="entry name" value="TRYPSIN_SER"/>
    <property type="match status" value="1"/>
</dbReference>
<accession>Q07006</accession>
<organism>
    <name type="scientific">Streptomyces griseus</name>
    <dbReference type="NCBI Taxonomy" id="1911"/>
    <lineage>
        <taxon>Bacteria</taxon>
        <taxon>Bacillati</taxon>
        <taxon>Actinomycetota</taxon>
        <taxon>Actinomycetes</taxon>
        <taxon>Kitasatosporales</taxon>
        <taxon>Streptomycetaceae</taxon>
        <taxon>Streptomyces</taxon>
    </lineage>
</organism>
<name>GLUP_STRGR</name>
<feature type="chain" id="PRO_0000093856" description="Glutamyl endopeptidase 2">
    <location>
        <begin position="1"/>
        <end position="188"/>
    </location>
</feature>
<feature type="active site" description="Charge relay system" evidence="1">
    <location>
        <position position="33"/>
    </location>
</feature>
<feature type="active site" description="Charge relay system" evidence="1">
    <location>
        <position position="62"/>
    </location>
</feature>
<feature type="active site" description="Charge relay system" evidence="1">
    <location>
        <position position="143"/>
    </location>
</feature>
<feature type="disulfide bond">
    <location>
        <begin position="14"/>
        <end position="34"/>
    </location>
</feature>
<feature type="disulfide bond">
    <location>
        <begin position="137"/>
        <end position="163"/>
    </location>
</feature>
<feature type="strand" evidence="3">
    <location>
        <begin position="6"/>
        <end position="9"/>
    </location>
</feature>
<feature type="strand" evidence="3">
    <location>
        <begin position="12"/>
        <end position="15"/>
    </location>
</feature>
<feature type="strand" evidence="3">
    <location>
        <begin position="18"/>
        <end position="22"/>
    </location>
</feature>
<feature type="strand" evidence="3">
    <location>
        <begin position="25"/>
        <end position="30"/>
    </location>
</feature>
<feature type="helix" evidence="3">
    <location>
        <begin position="32"/>
        <end position="35"/>
    </location>
</feature>
<feature type="strand" evidence="3">
    <location>
        <begin position="39"/>
        <end position="44"/>
    </location>
</feature>
<feature type="strand" evidence="3">
    <location>
        <begin position="49"/>
        <end position="57"/>
    </location>
</feature>
<feature type="strand" evidence="3">
    <location>
        <begin position="59"/>
        <end position="61"/>
    </location>
</feature>
<feature type="strand" evidence="3">
    <location>
        <begin position="63"/>
        <end position="68"/>
    </location>
</feature>
<feature type="strand" evidence="3">
    <location>
        <begin position="76"/>
        <end position="79"/>
    </location>
</feature>
<feature type="strand" evidence="3">
    <location>
        <begin position="81"/>
        <end position="83"/>
    </location>
</feature>
<feature type="strand" evidence="3">
    <location>
        <begin position="85"/>
        <end position="87"/>
    </location>
</feature>
<feature type="strand" evidence="3">
    <location>
        <begin position="99"/>
        <end position="104"/>
    </location>
</feature>
<feature type="turn" evidence="3">
    <location>
        <begin position="105"/>
        <end position="107"/>
    </location>
</feature>
<feature type="strand" evidence="3">
    <location>
        <begin position="108"/>
        <end position="123"/>
    </location>
</feature>
<feature type="strand" evidence="3">
    <location>
        <begin position="126"/>
        <end position="134"/>
    </location>
</feature>
<feature type="strand" evidence="3">
    <location>
        <begin position="146"/>
        <end position="149"/>
    </location>
</feature>
<feature type="strand" evidence="3">
    <location>
        <begin position="152"/>
        <end position="161"/>
    </location>
</feature>
<feature type="strand" evidence="3">
    <location>
        <begin position="171"/>
        <end position="174"/>
    </location>
</feature>
<feature type="helix" evidence="3">
    <location>
        <begin position="175"/>
        <end position="182"/>
    </location>
</feature>
<proteinExistence type="evidence at protein level"/>
<sequence>VLGGGAIYGGGSRCSAAFNVTKGGARYFVTAGHCTNISANWSASSGGSVVGVREGTSFPTNDYGIVRYTDGSSPAGTVDLYNGSTQDISSAANAVVGQAIKKSGSTTKVTSGTVTAVNVTVNYGDGPVYNMGRTTACSAGGDSGGAHFAGSVALGIHSGSSGCSGTAGSAIHQPVTKALSAYGVTVYL</sequence>
<evidence type="ECO:0000250" key="1"/>
<evidence type="ECO:0000305" key="2"/>
<evidence type="ECO:0007829" key="3">
    <source>
        <dbReference type="PDB" id="1HPG"/>
    </source>
</evidence>
<gene>
    <name type="primary">sprE</name>
</gene>